<gene>
    <name evidence="1" type="primary">atpG</name>
    <name type="ordered locus">VF_2565</name>
</gene>
<keyword id="KW-0066">ATP synthesis</keyword>
<keyword id="KW-0997">Cell inner membrane</keyword>
<keyword id="KW-1003">Cell membrane</keyword>
<keyword id="KW-0139">CF(1)</keyword>
<keyword id="KW-0375">Hydrogen ion transport</keyword>
<keyword id="KW-0406">Ion transport</keyword>
<keyword id="KW-0472">Membrane</keyword>
<keyword id="KW-1185">Reference proteome</keyword>
<keyword id="KW-0813">Transport</keyword>
<accession>Q5E1N6</accession>
<organism>
    <name type="scientific">Aliivibrio fischeri (strain ATCC 700601 / ES114)</name>
    <name type="common">Vibrio fischeri</name>
    <dbReference type="NCBI Taxonomy" id="312309"/>
    <lineage>
        <taxon>Bacteria</taxon>
        <taxon>Pseudomonadati</taxon>
        <taxon>Pseudomonadota</taxon>
        <taxon>Gammaproteobacteria</taxon>
        <taxon>Vibrionales</taxon>
        <taxon>Vibrionaceae</taxon>
        <taxon>Aliivibrio</taxon>
    </lineage>
</organism>
<name>ATPG_ALIF1</name>
<protein>
    <recommendedName>
        <fullName evidence="1">ATP synthase gamma chain</fullName>
    </recommendedName>
    <alternativeName>
        <fullName evidence="1">ATP synthase F1 sector gamma subunit</fullName>
    </alternativeName>
    <alternativeName>
        <fullName evidence="1">F-ATPase gamma subunit</fullName>
    </alternativeName>
</protein>
<proteinExistence type="inferred from homology"/>
<sequence length="288" mass="31961">MAGAKEIRNKIGSVKSTQKITKAMEMVAASKMRRSQESMEASRPYADTMRKVIGHLALGNLEYRHPYLEEREAKRVGYIVISSDRGLCGGLNINLFKKVMTEMKTWSEDGVEIDLAVIGSKATAFFNSYGGNVVAQNSGLGDHPSLEELIGTVGVMLKKYDEGQLDRLYVVNNKFINTMVQEPAIEQLLPLPKSEDEAMQRTHAWDYIYEPEPKPLLDALLVRYVESQVYQGVVENLACEHVARMIAMKAATDNAGDIIDELQLVYNKARQAAITQELSEIVSGASAV</sequence>
<comment type="function">
    <text evidence="1">Produces ATP from ADP in the presence of a proton gradient across the membrane. The gamma chain is believed to be important in regulating ATPase activity and the flow of protons through the CF(0) complex.</text>
</comment>
<comment type="subunit">
    <text evidence="1">F-type ATPases have 2 components, CF(1) - the catalytic core - and CF(0) - the membrane proton channel. CF(1) has five subunits: alpha(3), beta(3), gamma(1), delta(1), epsilon(1). CF(0) has three main subunits: a, b and c.</text>
</comment>
<comment type="subcellular location">
    <subcellularLocation>
        <location evidence="1">Cell inner membrane</location>
        <topology evidence="1">Peripheral membrane protein</topology>
    </subcellularLocation>
</comment>
<comment type="similarity">
    <text evidence="1">Belongs to the ATPase gamma chain family.</text>
</comment>
<feature type="chain" id="PRO_0000073412" description="ATP synthase gamma chain">
    <location>
        <begin position="1"/>
        <end position="288"/>
    </location>
</feature>
<dbReference type="EMBL" id="CP000020">
    <property type="protein sequence ID" value="AAW87060.1"/>
    <property type="molecule type" value="Genomic_DNA"/>
</dbReference>
<dbReference type="RefSeq" id="WP_011262900.1">
    <property type="nucleotide sequence ID" value="NC_006840.2"/>
</dbReference>
<dbReference type="RefSeq" id="YP_205948.1">
    <property type="nucleotide sequence ID" value="NC_006840.2"/>
</dbReference>
<dbReference type="SMR" id="Q5E1N6"/>
<dbReference type="STRING" id="312309.VF_2565"/>
<dbReference type="EnsemblBacteria" id="AAW87060">
    <property type="protein sequence ID" value="AAW87060"/>
    <property type="gene ID" value="VF_2565"/>
</dbReference>
<dbReference type="GeneID" id="54165315"/>
<dbReference type="KEGG" id="vfi:VF_2565"/>
<dbReference type="PATRIC" id="fig|312309.11.peg.2592"/>
<dbReference type="eggNOG" id="COG0224">
    <property type="taxonomic scope" value="Bacteria"/>
</dbReference>
<dbReference type="HOGENOM" id="CLU_050669_0_1_6"/>
<dbReference type="OrthoDB" id="9812769at2"/>
<dbReference type="Proteomes" id="UP000000537">
    <property type="component" value="Chromosome I"/>
</dbReference>
<dbReference type="GO" id="GO:0005886">
    <property type="term" value="C:plasma membrane"/>
    <property type="evidence" value="ECO:0007669"/>
    <property type="project" value="UniProtKB-SubCell"/>
</dbReference>
<dbReference type="GO" id="GO:0045259">
    <property type="term" value="C:proton-transporting ATP synthase complex"/>
    <property type="evidence" value="ECO:0007669"/>
    <property type="project" value="UniProtKB-KW"/>
</dbReference>
<dbReference type="GO" id="GO:0005524">
    <property type="term" value="F:ATP binding"/>
    <property type="evidence" value="ECO:0007669"/>
    <property type="project" value="UniProtKB-UniRule"/>
</dbReference>
<dbReference type="GO" id="GO:0046933">
    <property type="term" value="F:proton-transporting ATP synthase activity, rotational mechanism"/>
    <property type="evidence" value="ECO:0007669"/>
    <property type="project" value="UniProtKB-UniRule"/>
</dbReference>
<dbReference type="GO" id="GO:0042777">
    <property type="term" value="P:proton motive force-driven plasma membrane ATP synthesis"/>
    <property type="evidence" value="ECO:0007669"/>
    <property type="project" value="UniProtKB-UniRule"/>
</dbReference>
<dbReference type="CDD" id="cd12151">
    <property type="entry name" value="F1-ATPase_gamma"/>
    <property type="match status" value="1"/>
</dbReference>
<dbReference type="FunFam" id="1.10.287.80:FF:000005">
    <property type="entry name" value="ATP synthase gamma chain"/>
    <property type="match status" value="2"/>
</dbReference>
<dbReference type="FunFam" id="3.40.1380.10:FF:000001">
    <property type="entry name" value="ATP synthase gamma chain"/>
    <property type="match status" value="1"/>
</dbReference>
<dbReference type="Gene3D" id="3.40.1380.10">
    <property type="match status" value="1"/>
</dbReference>
<dbReference type="Gene3D" id="1.10.287.80">
    <property type="entry name" value="ATP synthase, gamma subunit, helix hairpin domain"/>
    <property type="match status" value="1"/>
</dbReference>
<dbReference type="HAMAP" id="MF_00815">
    <property type="entry name" value="ATP_synth_gamma_bact"/>
    <property type="match status" value="1"/>
</dbReference>
<dbReference type="InterPro" id="IPR035968">
    <property type="entry name" value="ATP_synth_F1_ATPase_gsu"/>
</dbReference>
<dbReference type="InterPro" id="IPR000131">
    <property type="entry name" value="ATP_synth_F1_gsu"/>
</dbReference>
<dbReference type="InterPro" id="IPR023632">
    <property type="entry name" value="ATP_synth_F1_gsu_CS"/>
</dbReference>
<dbReference type="NCBIfam" id="TIGR01146">
    <property type="entry name" value="ATPsyn_F1gamma"/>
    <property type="match status" value="1"/>
</dbReference>
<dbReference type="NCBIfam" id="NF004144">
    <property type="entry name" value="PRK05621.1-1"/>
    <property type="match status" value="1"/>
</dbReference>
<dbReference type="PANTHER" id="PTHR11693">
    <property type="entry name" value="ATP SYNTHASE GAMMA CHAIN"/>
    <property type="match status" value="1"/>
</dbReference>
<dbReference type="PANTHER" id="PTHR11693:SF22">
    <property type="entry name" value="ATP SYNTHASE SUBUNIT GAMMA, MITOCHONDRIAL"/>
    <property type="match status" value="1"/>
</dbReference>
<dbReference type="Pfam" id="PF00231">
    <property type="entry name" value="ATP-synt"/>
    <property type="match status" value="1"/>
</dbReference>
<dbReference type="PRINTS" id="PR00126">
    <property type="entry name" value="ATPASEGAMMA"/>
</dbReference>
<dbReference type="SUPFAM" id="SSF52943">
    <property type="entry name" value="ATP synthase (F1-ATPase), gamma subunit"/>
    <property type="match status" value="1"/>
</dbReference>
<dbReference type="PROSITE" id="PS00153">
    <property type="entry name" value="ATPASE_GAMMA"/>
    <property type="match status" value="1"/>
</dbReference>
<reference key="1">
    <citation type="journal article" date="2005" name="Proc. Natl. Acad. Sci. U.S.A.">
        <title>Complete genome sequence of Vibrio fischeri: a symbiotic bacterium with pathogenic congeners.</title>
        <authorList>
            <person name="Ruby E.G."/>
            <person name="Urbanowski M."/>
            <person name="Campbell J."/>
            <person name="Dunn A."/>
            <person name="Faini M."/>
            <person name="Gunsalus R."/>
            <person name="Lostroh P."/>
            <person name="Lupp C."/>
            <person name="McCann J."/>
            <person name="Millikan D."/>
            <person name="Schaefer A."/>
            <person name="Stabb E."/>
            <person name="Stevens A."/>
            <person name="Visick K."/>
            <person name="Whistler C."/>
            <person name="Greenberg E.P."/>
        </authorList>
    </citation>
    <scope>NUCLEOTIDE SEQUENCE [LARGE SCALE GENOMIC DNA]</scope>
    <source>
        <strain>ATCC 700601 / ES114</strain>
    </source>
</reference>
<evidence type="ECO:0000255" key="1">
    <source>
        <dbReference type="HAMAP-Rule" id="MF_00815"/>
    </source>
</evidence>